<reference key="1">
    <citation type="journal article" date="1988" name="J. Protein Chem.">
        <title>Primary structure of the hemoglobin alpha-chain of rose-ringed parakeet (Psittacula krameri).</title>
        <authorList>
            <person name="Islam A."/>
            <person name="Beg O.U."/>
            <person name="Persson B."/>
            <person name="Zaidi Z.H."/>
            <person name="Joernvall H."/>
        </authorList>
    </citation>
    <scope>PROTEIN SEQUENCE</scope>
</reference>
<sequence length="141" mass="15126">VLSGTDKTNVKSIFSKIGGQADDYGAEALERMFVTYPQTKTYFPHFDVSPGSAQVKAHGKKVAGGLSEAANHIDDIATSLSKLSDLHAQKLRVDPVNFKLLGQCFLVVVAIHNPSALTPEAHASLDKFLCAVGLVLTAKYR</sequence>
<name>HBA_PSIKR</name>
<organism>
    <name type="scientific">Psittacula krameri</name>
    <name type="common">Rose-ringed parakeet</name>
    <dbReference type="NCBI Taxonomy" id="9228"/>
    <lineage>
        <taxon>Eukaryota</taxon>
        <taxon>Metazoa</taxon>
        <taxon>Chordata</taxon>
        <taxon>Craniata</taxon>
        <taxon>Vertebrata</taxon>
        <taxon>Euteleostomi</taxon>
        <taxon>Archelosauria</taxon>
        <taxon>Archosauria</taxon>
        <taxon>Dinosauria</taxon>
        <taxon>Saurischia</taxon>
        <taxon>Theropoda</taxon>
        <taxon>Coelurosauria</taxon>
        <taxon>Aves</taxon>
        <taxon>Neognathae</taxon>
        <taxon>Neoaves</taxon>
        <taxon>Telluraves</taxon>
        <taxon>Australaves</taxon>
        <taxon>Psittaciformes</taxon>
        <taxon>Psittacidae</taxon>
        <taxon>Psittacula</taxon>
    </lineage>
</organism>
<comment type="function">
    <text>Involved in oxygen transport from the lung to the various peripheral tissues.</text>
</comment>
<comment type="subunit">
    <text>Heterotetramer of two alpha chains and two beta chains.</text>
</comment>
<comment type="tissue specificity">
    <text>Red blood cells.</text>
</comment>
<comment type="similarity">
    <text evidence="1">Belongs to the globin family.</text>
</comment>
<protein>
    <recommendedName>
        <fullName>Hemoglobin subunit alpha</fullName>
    </recommendedName>
    <alternativeName>
        <fullName>Alpha-globin</fullName>
    </alternativeName>
    <alternativeName>
        <fullName>Hemoglobin alpha chain</fullName>
    </alternativeName>
</protein>
<keyword id="KW-0002">3D-structure</keyword>
<keyword id="KW-0903">Direct protein sequencing</keyword>
<keyword id="KW-0349">Heme</keyword>
<keyword id="KW-0408">Iron</keyword>
<keyword id="KW-0479">Metal-binding</keyword>
<keyword id="KW-0561">Oxygen transport</keyword>
<keyword id="KW-0813">Transport</keyword>
<gene>
    <name type="primary">HBA</name>
</gene>
<accession>P19831</accession>
<feature type="chain" id="PRO_0000052742" description="Hemoglobin subunit alpha">
    <location>
        <begin position="1"/>
        <end position="141"/>
    </location>
</feature>
<feature type="domain" description="Globin" evidence="1">
    <location>
        <begin position="1"/>
        <end position="141"/>
    </location>
</feature>
<feature type="binding site" evidence="1">
    <location>
        <position position="58"/>
    </location>
    <ligand>
        <name>O2</name>
        <dbReference type="ChEBI" id="CHEBI:15379"/>
    </ligand>
</feature>
<feature type="binding site" description="proximal binding residue" evidence="1">
    <location>
        <position position="87"/>
    </location>
    <ligand>
        <name>heme b</name>
        <dbReference type="ChEBI" id="CHEBI:60344"/>
    </ligand>
    <ligandPart>
        <name>Fe</name>
        <dbReference type="ChEBI" id="CHEBI:18248"/>
    </ligandPart>
</feature>
<feature type="helix" evidence="2">
    <location>
        <begin position="4"/>
        <end position="16"/>
    </location>
</feature>
<feature type="helix" evidence="2">
    <location>
        <begin position="18"/>
        <end position="20"/>
    </location>
</feature>
<feature type="helix" evidence="2">
    <location>
        <begin position="21"/>
        <end position="35"/>
    </location>
</feature>
<feature type="helix" evidence="2">
    <location>
        <begin position="37"/>
        <end position="41"/>
    </location>
</feature>
<feature type="strand" evidence="2">
    <location>
        <begin position="44"/>
        <end position="46"/>
    </location>
</feature>
<feature type="helix" evidence="2">
    <location>
        <begin position="53"/>
        <end position="71"/>
    </location>
</feature>
<feature type="turn" evidence="2">
    <location>
        <begin position="72"/>
        <end position="74"/>
    </location>
</feature>
<feature type="helix" evidence="2">
    <location>
        <begin position="76"/>
        <end position="79"/>
    </location>
</feature>
<feature type="turn" evidence="2">
    <location>
        <begin position="80"/>
        <end position="82"/>
    </location>
</feature>
<feature type="helix" evidence="2">
    <location>
        <begin position="83"/>
        <end position="88"/>
    </location>
</feature>
<feature type="helix" evidence="2">
    <location>
        <begin position="96"/>
        <end position="112"/>
    </location>
</feature>
<feature type="turn" evidence="2">
    <location>
        <begin position="114"/>
        <end position="116"/>
    </location>
</feature>
<feature type="helix" evidence="2">
    <location>
        <begin position="119"/>
        <end position="135"/>
    </location>
</feature>
<feature type="helix" evidence="2">
    <location>
        <begin position="138"/>
        <end position="140"/>
    </location>
</feature>
<proteinExistence type="evidence at protein level"/>
<evidence type="ECO:0000255" key="1">
    <source>
        <dbReference type="PROSITE-ProRule" id="PRU00238"/>
    </source>
</evidence>
<evidence type="ECO:0007829" key="2">
    <source>
        <dbReference type="PDB" id="2ZFB"/>
    </source>
</evidence>
<dbReference type="PIR" id="A30332">
    <property type="entry name" value="A30332"/>
</dbReference>
<dbReference type="PDB" id="2ZFB">
    <property type="method" value="X-ray"/>
    <property type="resolution" value="3.00 A"/>
    <property type="chains" value="A=1-141"/>
</dbReference>
<dbReference type="PDBsum" id="2ZFB"/>
<dbReference type="SMR" id="P19831"/>
<dbReference type="EvolutionaryTrace" id="P19831"/>
<dbReference type="GO" id="GO:0072562">
    <property type="term" value="C:blood microparticle"/>
    <property type="evidence" value="ECO:0007669"/>
    <property type="project" value="TreeGrafter"/>
</dbReference>
<dbReference type="GO" id="GO:0031838">
    <property type="term" value="C:haptoglobin-hemoglobin complex"/>
    <property type="evidence" value="ECO:0007669"/>
    <property type="project" value="TreeGrafter"/>
</dbReference>
<dbReference type="GO" id="GO:0005833">
    <property type="term" value="C:hemoglobin complex"/>
    <property type="evidence" value="ECO:0007669"/>
    <property type="project" value="InterPro"/>
</dbReference>
<dbReference type="GO" id="GO:0031720">
    <property type="term" value="F:haptoglobin binding"/>
    <property type="evidence" value="ECO:0007669"/>
    <property type="project" value="TreeGrafter"/>
</dbReference>
<dbReference type="GO" id="GO:0020037">
    <property type="term" value="F:heme binding"/>
    <property type="evidence" value="ECO:0007669"/>
    <property type="project" value="InterPro"/>
</dbReference>
<dbReference type="GO" id="GO:0005506">
    <property type="term" value="F:iron ion binding"/>
    <property type="evidence" value="ECO:0007669"/>
    <property type="project" value="InterPro"/>
</dbReference>
<dbReference type="GO" id="GO:0043177">
    <property type="term" value="F:organic acid binding"/>
    <property type="evidence" value="ECO:0007669"/>
    <property type="project" value="TreeGrafter"/>
</dbReference>
<dbReference type="GO" id="GO:0019825">
    <property type="term" value="F:oxygen binding"/>
    <property type="evidence" value="ECO:0007669"/>
    <property type="project" value="InterPro"/>
</dbReference>
<dbReference type="GO" id="GO:0005344">
    <property type="term" value="F:oxygen carrier activity"/>
    <property type="evidence" value="ECO:0007669"/>
    <property type="project" value="UniProtKB-KW"/>
</dbReference>
<dbReference type="GO" id="GO:0004601">
    <property type="term" value="F:peroxidase activity"/>
    <property type="evidence" value="ECO:0007669"/>
    <property type="project" value="TreeGrafter"/>
</dbReference>
<dbReference type="GO" id="GO:0042744">
    <property type="term" value="P:hydrogen peroxide catabolic process"/>
    <property type="evidence" value="ECO:0007669"/>
    <property type="project" value="TreeGrafter"/>
</dbReference>
<dbReference type="CDD" id="cd08927">
    <property type="entry name" value="Hb-alpha-like"/>
    <property type="match status" value="1"/>
</dbReference>
<dbReference type="FunFam" id="1.10.490.10:FF:000002">
    <property type="entry name" value="Hemoglobin subunit alpha"/>
    <property type="match status" value="1"/>
</dbReference>
<dbReference type="Gene3D" id="1.10.490.10">
    <property type="entry name" value="Globins"/>
    <property type="match status" value="1"/>
</dbReference>
<dbReference type="InterPro" id="IPR000971">
    <property type="entry name" value="Globin"/>
</dbReference>
<dbReference type="InterPro" id="IPR009050">
    <property type="entry name" value="Globin-like_sf"/>
</dbReference>
<dbReference type="InterPro" id="IPR012292">
    <property type="entry name" value="Globin/Proto"/>
</dbReference>
<dbReference type="InterPro" id="IPR002338">
    <property type="entry name" value="Hemoglobin_a-typ"/>
</dbReference>
<dbReference type="InterPro" id="IPR050056">
    <property type="entry name" value="Hemoglobin_oxygen_transport"/>
</dbReference>
<dbReference type="InterPro" id="IPR002339">
    <property type="entry name" value="Hemoglobin_pi"/>
</dbReference>
<dbReference type="PANTHER" id="PTHR11442">
    <property type="entry name" value="HEMOGLOBIN FAMILY MEMBER"/>
    <property type="match status" value="1"/>
</dbReference>
<dbReference type="PANTHER" id="PTHR11442:SF48">
    <property type="entry name" value="HEMOGLOBIN SUBUNIT ALPHA"/>
    <property type="match status" value="1"/>
</dbReference>
<dbReference type="Pfam" id="PF00042">
    <property type="entry name" value="Globin"/>
    <property type="match status" value="1"/>
</dbReference>
<dbReference type="PRINTS" id="PR00612">
    <property type="entry name" value="ALPHAHAEM"/>
</dbReference>
<dbReference type="PRINTS" id="PR00815">
    <property type="entry name" value="PIHAEM"/>
</dbReference>
<dbReference type="SUPFAM" id="SSF46458">
    <property type="entry name" value="Globin-like"/>
    <property type="match status" value="1"/>
</dbReference>
<dbReference type="PROSITE" id="PS01033">
    <property type="entry name" value="GLOBIN"/>
    <property type="match status" value="1"/>
</dbReference>